<name>POLG_EC01F</name>
<dbReference type="EC" id="3.4.22.29" evidence="2"/>
<dbReference type="EC" id="3.6.1.15" evidence="2"/>
<dbReference type="EC" id="3.4.22.28" evidence="12"/>
<dbReference type="EC" id="2.7.7.48" evidence="10"/>
<dbReference type="EMBL" id="AF029859">
    <property type="protein sequence ID" value="AAC63944.2"/>
    <property type="molecule type" value="Genomic_RNA"/>
</dbReference>
<dbReference type="EMBL" id="X89531">
    <property type="protein sequence ID" value="CAA61710.1"/>
    <property type="molecule type" value="Genomic_RNA"/>
</dbReference>
<dbReference type="EMBL" id="AF081314">
    <property type="protein sequence ID" value="AAD17718.1"/>
    <property type="molecule type" value="Genomic_RNA"/>
</dbReference>
<dbReference type="PDB" id="1EV1">
    <property type="method" value="X-ray"/>
    <property type="resolution" value="3.55 A"/>
    <property type="chains" value="1=570-850, 2=77-330, 3=331-569, 4=2-69"/>
</dbReference>
<dbReference type="PDB" id="5IYT">
    <property type="method" value="X-ray"/>
    <property type="resolution" value="1.73 A"/>
    <property type="chains" value="A/B=1540-1722"/>
</dbReference>
<dbReference type="PDBsum" id="1EV1"/>
<dbReference type="PDBsum" id="5IYT"/>
<dbReference type="EMDB" id="EMD-0565"/>
<dbReference type="EMDB" id="EMD-4903"/>
<dbReference type="SMR" id="O91734"/>
<dbReference type="DrugBank" id="DB08231">
    <property type="generic name" value="Myristic acid"/>
</dbReference>
<dbReference type="MEROPS" id="C03.011"/>
<dbReference type="MEROPS" id="C03.020"/>
<dbReference type="MEROPS" id="N08.001"/>
<dbReference type="SABIO-RK" id="O91734"/>
<dbReference type="EvolutionaryTrace" id="O91734"/>
<dbReference type="Proteomes" id="UP000002694">
    <property type="component" value="Genome"/>
</dbReference>
<dbReference type="GO" id="GO:0044162">
    <property type="term" value="C:host cell cytoplasmic vesicle membrane"/>
    <property type="evidence" value="ECO:0007669"/>
    <property type="project" value="UniProtKB-SubCell"/>
</dbReference>
<dbReference type="GO" id="GO:0042025">
    <property type="term" value="C:host cell nucleus"/>
    <property type="evidence" value="ECO:0007669"/>
    <property type="project" value="UniProtKB-SubCell"/>
</dbReference>
<dbReference type="GO" id="GO:0016020">
    <property type="term" value="C:membrane"/>
    <property type="evidence" value="ECO:0007669"/>
    <property type="project" value="UniProtKB-KW"/>
</dbReference>
<dbReference type="GO" id="GO:0039618">
    <property type="term" value="C:T=pseudo3 icosahedral viral capsid"/>
    <property type="evidence" value="ECO:0007669"/>
    <property type="project" value="UniProtKB-KW"/>
</dbReference>
<dbReference type="GO" id="GO:0005524">
    <property type="term" value="F:ATP binding"/>
    <property type="evidence" value="ECO:0007669"/>
    <property type="project" value="UniProtKB-KW"/>
</dbReference>
<dbReference type="GO" id="GO:0016887">
    <property type="term" value="F:ATP hydrolysis activity"/>
    <property type="evidence" value="ECO:0007669"/>
    <property type="project" value="InterPro"/>
</dbReference>
<dbReference type="GO" id="GO:0015267">
    <property type="term" value="F:channel activity"/>
    <property type="evidence" value="ECO:0007669"/>
    <property type="project" value="UniProtKB-KW"/>
</dbReference>
<dbReference type="GO" id="GO:0004197">
    <property type="term" value="F:cysteine-type endopeptidase activity"/>
    <property type="evidence" value="ECO:0007669"/>
    <property type="project" value="UniProtKB-EC"/>
</dbReference>
<dbReference type="GO" id="GO:0003723">
    <property type="term" value="F:RNA binding"/>
    <property type="evidence" value="ECO:0007669"/>
    <property type="project" value="UniProtKB-KW"/>
</dbReference>
<dbReference type="GO" id="GO:0003724">
    <property type="term" value="F:RNA helicase activity"/>
    <property type="evidence" value="ECO:0007669"/>
    <property type="project" value="InterPro"/>
</dbReference>
<dbReference type="GO" id="GO:0003968">
    <property type="term" value="F:RNA-directed RNA polymerase activity"/>
    <property type="evidence" value="ECO:0007669"/>
    <property type="project" value="UniProtKB-KW"/>
</dbReference>
<dbReference type="GO" id="GO:0005198">
    <property type="term" value="F:structural molecule activity"/>
    <property type="evidence" value="ECO:0007669"/>
    <property type="project" value="InterPro"/>
</dbReference>
<dbReference type="GO" id="GO:0008270">
    <property type="term" value="F:zinc ion binding"/>
    <property type="evidence" value="ECO:0007669"/>
    <property type="project" value="UniProtKB-KW"/>
</dbReference>
<dbReference type="GO" id="GO:0075513">
    <property type="term" value="P:caveolin-mediated endocytosis of virus by host cell"/>
    <property type="evidence" value="ECO:0007669"/>
    <property type="project" value="UniProtKB-KW"/>
</dbReference>
<dbReference type="GO" id="GO:0006260">
    <property type="term" value="P:DNA replication"/>
    <property type="evidence" value="ECO:0007669"/>
    <property type="project" value="UniProtKB-KW"/>
</dbReference>
<dbReference type="GO" id="GO:0006351">
    <property type="term" value="P:DNA-templated transcription"/>
    <property type="evidence" value="ECO:0007669"/>
    <property type="project" value="InterPro"/>
</dbReference>
<dbReference type="GO" id="GO:0034220">
    <property type="term" value="P:monoatomic ion transmembrane transport"/>
    <property type="evidence" value="ECO:0007669"/>
    <property type="project" value="UniProtKB-KW"/>
</dbReference>
<dbReference type="GO" id="GO:0006508">
    <property type="term" value="P:proteolysis"/>
    <property type="evidence" value="ECO:0007669"/>
    <property type="project" value="UniProtKB-KW"/>
</dbReference>
<dbReference type="GO" id="GO:0044694">
    <property type="term" value="P:symbiont genome entry into host cell via pore formation in plasma membrane"/>
    <property type="evidence" value="ECO:0007669"/>
    <property type="project" value="UniProtKB-KW"/>
</dbReference>
<dbReference type="GO" id="GO:0039520">
    <property type="term" value="P:symbiont-mediated activation of host autophagy"/>
    <property type="evidence" value="ECO:0000250"/>
    <property type="project" value="UniProtKB"/>
</dbReference>
<dbReference type="GO" id="GO:0039540">
    <property type="term" value="P:symbiont-mediated suppression of host cytoplasmic pattern recognition receptor signaling pathway via inhibition of RIG-I activity"/>
    <property type="evidence" value="ECO:0007669"/>
    <property type="project" value="UniProtKB-KW"/>
</dbReference>
<dbReference type="GO" id="GO:0039522">
    <property type="term" value="P:symbiont-mediated suppression of host mRNA export from nucleus"/>
    <property type="evidence" value="ECO:0007669"/>
    <property type="project" value="UniProtKB-KW"/>
</dbReference>
<dbReference type="GO" id="GO:0039694">
    <property type="term" value="P:viral RNA genome replication"/>
    <property type="evidence" value="ECO:0007669"/>
    <property type="project" value="InterPro"/>
</dbReference>
<dbReference type="GO" id="GO:0019062">
    <property type="term" value="P:virion attachment to host cell"/>
    <property type="evidence" value="ECO:0007669"/>
    <property type="project" value="UniProtKB-KW"/>
</dbReference>
<dbReference type="CDD" id="cd23213">
    <property type="entry name" value="Enterovirus_RdRp"/>
    <property type="match status" value="1"/>
</dbReference>
<dbReference type="CDD" id="cd00205">
    <property type="entry name" value="rhv_like"/>
    <property type="match status" value="3"/>
</dbReference>
<dbReference type="FunFam" id="1.20.960.20:FF:000001">
    <property type="entry name" value="Genome polyprotein"/>
    <property type="match status" value="1"/>
</dbReference>
<dbReference type="FunFam" id="2.40.10.10:FF:000018">
    <property type="entry name" value="Genome polyprotein"/>
    <property type="match status" value="1"/>
</dbReference>
<dbReference type="FunFam" id="2.40.10.10:FF:000020">
    <property type="entry name" value="Genome polyprotein"/>
    <property type="match status" value="1"/>
</dbReference>
<dbReference type="FunFam" id="2.40.10.10:FF:000022">
    <property type="entry name" value="Genome polyprotein"/>
    <property type="match status" value="1"/>
</dbReference>
<dbReference type="FunFam" id="2.60.120.20:FF:000001">
    <property type="entry name" value="Genome polyprotein"/>
    <property type="match status" value="1"/>
</dbReference>
<dbReference type="FunFam" id="2.60.120.20:FF:000002">
    <property type="entry name" value="Genome polyprotein"/>
    <property type="match status" value="1"/>
</dbReference>
<dbReference type="FunFam" id="2.60.120.20:FF:000004">
    <property type="entry name" value="Genome polyprotein"/>
    <property type="match status" value="1"/>
</dbReference>
<dbReference type="FunFam" id="3.30.70.270:FF:000008">
    <property type="entry name" value="Genome polyprotein"/>
    <property type="match status" value="1"/>
</dbReference>
<dbReference type="FunFam" id="4.10.80.10:FF:000001">
    <property type="entry name" value="Genome polyprotein"/>
    <property type="match status" value="1"/>
</dbReference>
<dbReference type="FunFam" id="4.10.880.10:FF:000001">
    <property type="entry name" value="Genome polyprotein"/>
    <property type="match status" value="1"/>
</dbReference>
<dbReference type="FunFam" id="4.10.880.10:FF:000002">
    <property type="entry name" value="Genome polyprotein"/>
    <property type="match status" value="1"/>
</dbReference>
<dbReference type="Gene3D" id="1.20.960.20">
    <property type="match status" value="1"/>
</dbReference>
<dbReference type="Gene3D" id="2.60.120.20">
    <property type="match status" value="3"/>
</dbReference>
<dbReference type="Gene3D" id="3.30.70.270">
    <property type="match status" value="1"/>
</dbReference>
<dbReference type="Gene3D" id="4.10.80.10">
    <property type="entry name" value="Picornavirus coat protein VP4"/>
    <property type="match status" value="1"/>
</dbReference>
<dbReference type="Gene3D" id="6.10.20.20">
    <property type="entry name" value="Poliovirus 3A protein-like"/>
    <property type="match status" value="1"/>
</dbReference>
<dbReference type="Gene3D" id="4.10.880.10">
    <property type="entry name" value="Poliovirus 3D polymerase Domain 1 (Nucleotidyltransferase)"/>
    <property type="match status" value="2"/>
</dbReference>
<dbReference type="Gene3D" id="2.40.10.10">
    <property type="entry name" value="Trypsin-like serine proteases"/>
    <property type="match status" value="4"/>
</dbReference>
<dbReference type="InterPro" id="IPR003593">
    <property type="entry name" value="AAA+_ATPase"/>
</dbReference>
<dbReference type="InterPro" id="IPR043502">
    <property type="entry name" value="DNA/RNA_pol_sf"/>
</dbReference>
<dbReference type="InterPro" id="IPR000605">
    <property type="entry name" value="Helicase_SF3_ssDNA/RNA_vir"/>
</dbReference>
<dbReference type="InterPro" id="IPR014759">
    <property type="entry name" value="Helicase_SF3_ssRNA_vir"/>
</dbReference>
<dbReference type="InterPro" id="IPR027417">
    <property type="entry name" value="P-loop_NTPase"/>
</dbReference>
<dbReference type="InterPro" id="IPR014838">
    <property type="entry name" value="P3A"/>
</dbReference>
<dbReference type="InterPro" id="IPR036203">
    <property type="entry name" value="P3A_soluble_dom"/>
</dbReference>
<dbReference type="InterPro" id="IPR044067">
    <property type="entry name" value="PCV_3C_PRO"/>
</dbReference>
<dbReference type="InterPro" id="IPR000081">
    <property type="entry name" value="Peptidase_C3"/>
</dbReference>
<dbReference type="InterPro" id="IPR000199">
    <property type="entry name" value="Peptidase_C3A/C3B_picornavir"/>
</dbReference>
<dbReference type="InterPro" id="IPR009003">
    <property type="entry name" value="Peptidase_S1_PA"/>
</dbReference>
<dbReference type="InterPro" id="IPR043504">
    <property type="entry name" value="Peptidase_S1_PA_chymotrypsin"/>
</dbReference>
<dbReference type="InterPro" id="IPR003138">
    <property type="entry name" value="Pico_P1A"/>
</dbReference>
<dbReference type="InterPro" id="IPR036988">
    <property type="entry name" value="Pico_P1A_sf"/>
</dbReference>
<dbReference type="InterPro" id="IPR002527">
    <property type="entry name" value="Pico_P2B"/>
</dbReference>
<dbReference type="InterPro" id="IPR001676">
    <property type="entry name" value="Picornavirus_capsid"/>
</dbReference>
<dbReference type="InterPro" id="IPR043128">
    <property type="entry name" value="Rev_trsase/Diguanyl_cyclase"/>
</dbReference>
<dbReference type="InterPro" id="IPR033703">
    <property type="entry name" value="Rhv-like"/>
</dbReference>
<dbReference type="InterPro" id="IPR001205">
    <property type="entry name" value="RNA-dir_pol_C"/>
</dbReference>
<dbReference type="InterPro" id="IPR007094">
    <property type="entry name" value="RNA-dir_pol_PSvirus"/>
</dbReference>
<dbReference type="InterPro" id="IPR029053">
    <property type="entry name" value="Viral_coat"/>
</dbReference>
<dbReference type="Pfam" id="PF08727">
    <property type="entry name" value="P3A"/>
    <property type="match status" value="1"/>
</dbReference>
<dbReference type="Pfam" id="PF00548">
    <property type="entry name" value="Peptidase_C3"/>
    <property type="match status" value="1"/>
</dbReference>
<dbReference type="Pfam" id="PF02226">
    <property type="entry name" value="Pico_P1A"/>
    <property type="match status" value="1"/>
</dbReference>
<dbReference type="Pfam" id="PF00947">
    <property type="entry name" value="Pico_P2A"/>
    <property type="match status" value="1"/>
</dbReference>
<dbReference type="Pfam" id="PF01552">
    <property type="entry name" value="Pico_P2B"/>
    <property type="match status" value="1"/>
</dbReference>
<dbReference type="Pfam" id="PF00680">
    <property type="entry name" value="RdRP_1"/>
    <property type="match status" value="1"/>
</dbReference>
<dbReference type="Pfam" id="PF00073">
    <property type="entry name" value="Rhv"/>
    <property type="match status" value="3"/>
</dbReference>
<dbReference type="Pfam" id="PF00910">
    <property type="entry name" value="RNA_helicase"/>
    <property type="match status" value="1"/>
</dbReference>
<dbReference type="SMART" id="SM00382">
    <property type="entry name" value="AAA"/>
    <property type="match status" value="1"/>
</dbReference>
<dbReference type="SUPFAM" id="SSF56672">
    <property type="entry name" value="DNA/RNA polymerases"/>
    <property type="match status" value="1"/>
</dbReference>
<dbReference type="SUPFAM" id="SSF52540">
    <property type="entry name" value="P-loop containing nucleoside triphosphate hydrolases"/>
    <property type="match status" value="1"/>
</dbReference>
<dbReference type="SUPFAM" id="SSF88633">
    <property type="entry name" value="Positive stranded ssRNA viruses"/>
    <property type="match status" value="2"/>
</dbReference>
<dbReference type="SUPFAM" id="SSF89043">
    <property type="entry name" value="Soluble domain of poliovirus core protein 3a"/>
    <property type="match status" value="1"/>
</dbReference>
<dbReference type="SUPFAM" id="SSF50494">
    <property type="entry name" value="Trypsin-like serine proteases"/>
    <property type="match status" value="2"/>
</dbReference>
<dbReference type="PROSITE" id="PS51874">
    <property type="entry name" value="PCV_3C_PRO"/>
    <property type="match status" value="1"/>
</dbReference>
<dbReference type="PROSITE" id="PS50507">
    <property type="entry name" value="RDRP_SSRNA_POS"/>
    <property type="match status" value="1"/>
</dbReference>
<dbReference type="PROSITE" id="PS51218">
    <property type="entry name" value="SF3_HELICASE_2"/>
    <property type="match status" value="1"/>
</dbReference>
<evidence type="ECO:0000250" key="1">
    <source>
        <dbReference type="UniProtKB" id="B9VUU3"/>
    </source>
</evidence>
<evidence type="ECO:0000250" key="2">
    <source>
        <dbReference type="UniProtKB" id="P03300"/>
    </source>
</evidence>
<evidence type="ECO:0000250" key="3">
    <source>
        <dbReference type="UniProtKB" id="P03301"/>
    </source>
</evidence>
<evidence type="ECO:0000250" key="4">
    <source>
        <dbReference type="UniProtKB" id="P03303"/>
    </source>
</evidence>
<evidence type="ECO:0000250" key="5">
    <source>
        <dbReference type="UniProtKB" id="P03313"/>
    </source>
</evidence>
<evidence type="ECO:0000250" key="6">
    <source>
        <dbReference type="UniProtKB" id="P04936"/>
    </source>
</evidence>
<evidence type="ECO:0000250" key="7">
    <source>
        <dbReference type="UniProtKB" id="Q66478"/>
    </source>
</evidence>
<evidence type="ECO:0000250" key="8">
    <source>
        <dbReference type="UniProtKB" id="Q9QF31"/>
    </source>
</evidence>
<evidence type="ECO:0000255" key="9"/>
<evidence type="ECO:0000255" key="10">
    <source>
        <dbReference type="PROSITE-ProRule" id="PRU00539"/>
    </source>
</evidence>
<evidence type="ECO:0000255" key="11">
    <source>
        <dbReference type="PROSITE-ProRule" id="PRU00551"/>
    </source>
</evidence>
<evidence type="ECO:0000255" key="12">
    <source>
        <dbReference type="PROSITE-ProRule" id="PRU01222"/>
    </source>
</evidence>
<evidence type="ECO:0000269" key="13">
    <source>
    </source>
</evidence>
<evidence type="ECO:0000269" key="14">
    <source>
    </source>
</evidence>
<evidence type="ECO:0000305" key="15"/>
<evidence type="ECO:0007829" key="16">
    <source>
        <dbReference type="PDB" id="5IYT"/>
    </source>
</evidence>
<keyword id="KW-0002">3D-structure</keyword>
<keyword id="KW-1072">Activation of host autophagy by virus</keyword>
<keyword id="KW-0067">ATP-binding</keyword>
<keyword id="KW-0068">Autocatalytic cleavage</keyword>
<keyword id="KW-0167">Capsid protein</keyword>
<keyword id="KW-1166">Caveolin-mediated endocytosis of virus by host</keyword>
<keyword id="KW-0191">Covalent protein-RNA linkage</keyword>
<keyword id="KW-0235">DNA replication</keyword>
<keyword id="KW-1262">Eukaryotic host gene expression shutoff by virus</keyword>
<keyword id="KW-1193">Eukaryotic host translation shutoff by virus</keyword>
<keyword id="KW-0347">Helicase</keyword>
<keyword id="KW-1035">Host cytoplasm</keyword>
<keyword id="KW-1036">Host cytoplasmic vesicle</keyword>
<keyword id="KW-1190">Host gene expression shutoff by virus</keyword>
<keyword id="KW-1043">Host membrane</keyword>
<keyword id="KW-1192">Host mRNA suppression by virus</keyword>
<keyword id="KW-1048">Host nucleus</keyword>
<keyword id="KW-0945">Host-virus interaction</keyword>
<keyword id="KW-0378">Hydrolase</keyword>
<keyword id="KW-1090">Inhibition of host innate immune response by virus</keyword>
<keyword id="KW-1099">Inhibition of host mRNA nuclear export by virus</keyword>
<keyword id="KW-1088">Inhibition of host RIG-I by virus</keyword>
<keyword id="KW-1113">Inhibition of host RLR pathway by virus</keyword>
<keyword id="KW-0407">Ion channel</keyword>
<keyword id="KW-0406">Ion transport</keyword>
<keyword id="KW-0449">Lipoprotein</keyword>
<keyword id="KW-0460">Magnesium</keyword>
<keyword id="KW-0472">Membrane</keyword>
<keyword id="KW-0479">Metal-binding</keyword>
<keyword id="KW-0519">Myristate</keyword>
<keyword id="KW-0547">Nucleotide-binding</keyword>
<keyword id="KW-0548">Nucleotidyltransferase</keyword>
<keyword id="KW-0597">Phosphoprotein</keyword>
<keyword id="KW-1172">Pore-mediated penetration of viral genome into host cell</keyword>
<keyword id="KW-0645">Protease</keyword>
<keyword id="KW-0677">Repeat</keyword>
<keyword id="KW-0694">RNA-binding</keyword>
<keyword id="KW-0696">RNA-directed RNA polymerase</keyword>
<keyword id="KW-1143">T=pseudo3 icosahedral capsid protein</keyword>
<keyword id="KW-0788">Thiol protease</keyword>
<keyword id="KW-0808">Transferase</keyword>
<keyword id="KW-0813">Transport</keyword>
<keyword id="KW-1161">Viral attachment to host cell</keyword>
<keyword id="KW-0899">Viral immunoevasion</keyword>
<keyword id="KW-1182">Viral ion channel</keyword>
<keyword id="KW-1162">Viral penetration into host cytoplasm</keyword>
<keyword id="KW-0693">Viral RNA replication</keyword>
<keyword id="KW-0946">Virion</keyword>
<keyword id="KW-1164">Virus endocytosis by host</keyword>
<keyword id="KW-1160">Virus entry into host cell</keyword>
<keyword id="KW-0862">Zinc</keyword>
<keyword id="KW-0863">Zinc-finger</keyword>
<reference key="1">
    <citation type="submission" date="2000-04" db="EMBL/GenBank/DDBJ databases">
        <title>Receptor interactions, infectious cDNA, and nucleotide sequences of echovirus 1/8.</title>
        <authorList>
            <person name="Bergelson J.M."/>
        </authorList>
    </citation>
    <scope>NUCLEOTIDE SEQUENCE [GENOMIC RNA]</scope>
</reference>
<reference key="2">
    <citation type="journal article" date="1996" name="J. Gen. Virol.">
        <title>The major echovirus group is genetically coherent and related to coxsackie B viruses.</title>
        <authorList>
            <person name="Huttunen P."/>
            <person name="Santti J."/>
            <person name="Pulli T."/>
            <person name="Hyypiae T."/>
        </authorList>
    </citation>
    <scope>NUCLEOTIDE SEQUENCE [GENOMIC RNA] OF 69-330</scope>
</reference>
<reference key="3">
    <citation type="journal article" date="1999" name="J. Virol.">
        <title>Molecular evolution of the human enteroviruses: correlation of serotype with VP1 sequence and application to picornavirus classification.</title>
        <authorList>
            <person name="Oberste M.S."/>
            <person name="Maher K."/>
            <person name="Kilpatrick D.R."/>
            <person name="Pallansch M.A."/>
        </authorList>
    </citation>
    <scope>NUCLEOTIDE SEQUENCE [GENOMIC RNA] OF 570-853</scope>
</reference>
<reference key="4">
    <citation type="journal article" date="1993" name="J. Virol.">
        <title>Infection by echoviruses 1 and 8 depends on the alpha 2 subunit of human VLA-2.</title>
        <authorList>
            <person name="Bergelson J.M."/>
            <person name="St John N."/>
            <person name="Kawaguchi S."/>
            <person name="Chan M."/>
            <person name="Stubdal H."/>
            <person name="Modlin J."/>
            <person name="Finberg R.W."/>
        </authorList>
    </citation>
    <scope>FUNCTION (CAPSID PROTEIN VP1)</scope>
</reference>
<reference key="5">
    <citation type="journal article" date="2002" name="J. Virol.">
        <title>Internalization of echovirus 1 in caveolae.</title>
        <authorList>
            <person name="Marjomaki V."/>
            <person name="Pietiainen V."/>
            <person name="Matilainen H."/>
            <person name="Upla P."/>
            <person name="Ivaska J."/>
            <person name="Nissinen L."/>
            <person name="Reunanen H."/>
            <person name="Huttunen P."/>
            <person name="Hyypia T."/>
            <person name="Heino J."/>
        </authorList>
    </citation>
    <scope>FUNCTION (CAPSID PROTEIN VP1)</scope>
</reference>
<reference key="6">
    <citation type="journal article" date="2004" name="Mol. Biol. Cell">
        <title>Echovirus 1 endocytosis into caveosomes requires lipid rafts, dynamin II, and signaling events.</title>
        <authorList>
            <person name="Pietiainen V."/>
            <person name="Marjomaki V."/>
            <person name="Upla P."/>
            <person name="Pelkmans L."/>
            <person name="Helenius A."/>
            <person name="Hyypia T."/>
        </authorList>
    </citation>
    <scope>FUNCTION (CAPSID PROTEIN VP1)</scope>
</reference>
<reference key="7">
    <citation type="journal article" date="1998" name="Acta Crystallogr. D">
        <title>Structure determination of echovirus 1.</title>
        <authorList>
            <person name="Filman D.J."/>
            <person name="Wien M.W."/>
            <person name="Cunningham J.A."/>
            <person name="Bergelson J.M."/>
            <person name="Hogle J.M."/>
        </authorList>
    </citation>
    <scope>X-RAY CRYSTALLOGRAPHY (3.55 ANGSTROMS) OF 1-850</scope>
</reference>
<sequence>MGAQVSTQKTGAHETSLSATGNSIIHYTNINYYKDAASNSANRQDFTQDPGKFTEPMKDVMIKTLPALNSPTVEECGYSDRVRSITLGNSTITTQECANVVVGYGEWPEYLSDNEATAEDQPTQPDVATCRFYTLDSVQWENGSPGWWWKFPDALRDMGLFGQNMYYHYLGRAGYTIHVQCNASKFHQGCILVVCVPEAEMGSAQTSGVVNYEHISKGEIASRFTTTTTAEDHGVQAAVWNAGMGVGVGNLTIFPHQWINLRTNNSATIVMPYVNSVPMDNMYRHHNFTLMIIPFVPLDFSAGASTYVPITVTVAPMCAEYNGLRLAGHQGLPTMNTPGSNQFLTSDDFQSPSAMPQFDVTPEMHIPGEVRNLMEIAEVDSVMPINNDSAAKVSSMEAYRVELSTNTNAGTQVFGFQLNPGAESVMNRTLMGEILNYYAHWSGSIKITFVFCGSAMTTGKFLLSYAPPGAGAPKTRKDAMLGTHVVWDVGLQSSCVLCIPWISQTHYRFVEKDPYTNAGFVTCWYQTSVVSPASNQPKCYMMCMVSACNDFSVRMLRDTKFIEQTSFYQGDVQNAVEGAMVRVADTVQTSATNSERVPNLTAVETGHTSQAVPGDTMQTRHVINNHVRSESTIENFLARSACVFYLEYKTGTKEDSNSFNNWVITTRRVAQLRRKLEMFTYLRFDMEITVVITSSQDQSTSQNQNAPVLTHQIMYVPPGGPIPVSVDDYSWQTSTNPSIFWTEGNAPARMSIPFISIGNAYSNFYDGWSHFSQAGVYGFTTLNNMGQLFFRHVNKPNPAAITSVARIYFKPKHVRAWVPRPPRLCPYINSTNVNFEPKPVTEVRTNIITTGAFGQQSGAVYVGNYRVVNRHLATHIDWQNCVWEDYNRDLLVSTTTAHGCDTIARCQCTTGVYFCLSRNKHYPVSFEGPGLVEVQESEYYPKRYQSHVLLAAGFSEPGDCGGILRCEHGVIGIVTMGGEGVVGFADVRDLLWLEDDAMEQGVKDYVEQLGNAFGSGFTNQICEQVNLLKESLVGQDSILEKSLKALVKIISALVIVVRNHDDLITVTATLALIGCTSSPWRWLKQKVSQYYGIPMAERQNNGWLKKFTEMTNACKGMEWIAIKIQKFIEWLKVKILPEVKEKHEFLNRLKQLPLLESQIATIEQSAPSQGDQEQLFSNVQYFAHYCRKYAPLYAAEAKRVFSLEKKMSNYIQFKSKCRIEPVCLLLHGSPGAGKSVATNLIGRSLAEKLNSSVYSLPPDPDHFDGYKQQAVVIMDDLCQNPDGKDVSLFCQMVSSVDFVPPMAALEEKGILFTSPFVLASTNAGSINAPTVSDSRALARRFHFDMNIEVISMYSQNGKINMPMSVKTCDEDCCPVNFKKCCPLVCGKAIQFIDRKTQVRYSLDMLVTEMFREYNHRHSVGATLEALFQGPPVYREIKISVAPETPPPPAIADLLKSVDSEAVREYCKEKGWLVPEISSTLQIEKHVSRAFICLQALTTFVSVAGIIYIIYKLFAGFQGAYTGMPNQKPKVPTLRQAKVQGPAFEFAVAMMKRNASTVKTEYGEFTMLGIYDRWAVLPRHAKPGPTILMNDQEVGVLDAKELVDKDGTNLELTLLKLNRNEKFRDIRGFLAREEAEVNEAVLAINTSKFPNMYIPVGQVTDYGFLNLGGTPTKRMLMYNFPTRAGQCGGVLMSTGKVLGIHVGGNGHQGFSAALLRHYFNEEQGEIEFIESSKDAGFPVINTPSKTKLEPSVFHQVFEGNKEPAVLRNGDPRLKVNFEEAIFSKYIGNVNTHVDEYMQEAVDHYAGQLATLDISTEPMKLEDAVYGTEGLEALDLTTSAGYPYVALGIKKRDILSKKTKDLTKLKECMDKYGLNLPMVTYVKDELRSAEKVAKGKSRLIEASSLNDSVAMRQTFGNLYKTFHLNPGIVTGSAVGCDPDVFWSKIPVMLDGHLIAFDYSGYDASLSPVWFACLKLLLEKLGYTNKETNYIDYLCNSHHLYRDKHYFVRGGMPSGCSGTSIFNSMINNIIIRTLMLKVYKGIDLDQFRMIAYGDDVIASYPWPIDASLLAEAGKDYGLIMTPADKGECFNEVTWTNVTFLKRYFRADEQYPFLVHPVMPMKDIHESIRWTKDPKNTQDHVRSLCLLAWHNGEHEYEEFIRKIRSVPVGRCLTLPAFSTLRRKWLDSF</sequence>
<comment type="function">
    <molecule>Capsid protein VP1</molecule>
    <text evidence="2 13 14">Forms an icosahedral capsid of pseudo T=3 symmetry with capsid proteins VP2 and VP3 (By similarity). The capsid is 300 Angstroms in diameter, composed of 60 copies of each capsid protein and enclosing the viral positive strand RNA genome (By similarity). Capsid protein VP1 mainly forms the vertices of the capsid (By similarity). Capsid protein VP1 interacts with host ITGA2/ITGB1 to provide virion attachment to target host cells (By similarity). This attachment induces virion internalization predominantly through caveolin-mediated endocytosis (PubMed:11799180, PubMed:15356270). Tyrosine kinases are probably involved in the entry process (By similarity). After binding to its receptor, the capsid undergoes conformational changes (By similarity). Capsid protein VP1 N-terminus (that contains an amphipathic alpha-helix) and capsid protein VP4 are externalized (By similarity). Together, they shape a pore in the host membrane through which viral genome is translocated to host cell cytoplasm (By similarity).</text>
</comment>
<comment type="function">
    <molecule>Capsid protein VP2</molecule>
    <text evidence="2">Forms an icosahedral capsid of pseudo T=3 symmetry with capsid proteins VP2 and VP3 (By similarity). The capsid is 300 Angstroms in diameter, composed of 60 copies of each capsid protein and enclosing the viral positive strand RNA genome (By similarity).</text>
</comment>
<comment type="function">
    <molecule>Capsid protein VP3</molecule>
    <text evidence="2">Forms an icosahedral capsid of pseudo T=3 symmetry with capsid proteins VP2 and VP3 (By similarity). The capsid is 300 Angstroms in diameter, composed of 60 copies of each capsid protein and enclosing the viral positive strand RNA genome (By similarity).</text>
</comment>
<comment type="function">
    <molecule>Capsid protein VP4</molecule>
    <text evidence="2">Lies on the inner surface of the capsid shell (By similarity). After binding to the host receptor, the capsid undergoes conformational changes (By similarity). Capsid protein VP4 is released, Capsid protein VP1 N-terminus is externalized, and together, they shape a pore in the host membrane through which the viral genome is translocated into the host cell cytoplasm (By similarity).</text>
</comment>
<comment type="function">
    <molecule>Capsid protein VP0</molecule>
    <text evidence="2">Component of immature procapsids, which is cleaved into capsid proteins VP4 and VP2 after maturation (By similarity). Allows the capsid to remain inactive before the maturation step (By similarity).</text>
</comment>
<comment type="function">
    <molecule>Protease 2A</molecule>
    <text evidence="2 3">Cysteine protease that cleaves viral polyprotein and specific host proteins (By similarity). It is responsible for the autocatalytic cleavage between the P1 and P2 regions, which is the first cleavage occurring in the polyprotein (By similarity). Also cleaves the host translation initiation factor EIF4G1, in order to shut down the capped cellular mRNA translation (By similarity). Inhibits the host nucleus-cytoplasm protein and RNA trafficking by cleaving host members of the nuclear pores (By similarity). Counteracts stress granule formation probably by antagonizing its assembly or promoting its dissassembly (By similarity).</text>
</comment>
<comment type="function">
    <molecule>Protein 2B</molecule>
    <text evidence="2">Plays an essential role in the virus replication cycle by acting as a viroporin. Creates a pore in the host endoplasmic reticulum and as a consequence releases Ca2+ in the cytoplasm of infected cell. In turn, high levels of cytoplasmic calcium may trigger membrane trafficking and transport of viral ER-associated proteins to viroplasms, sites of viral genome replication.</text>
</comment>
<comment type="function">
    <molecule>Protein 2C</molecule>
    <text evidence="2">Induces and associates with structural rearrangements of intracellular membranes. Displays RNA-binding, nucleotide binding and NTPase activities. May play a role in virion morphogenesis and viral RNA encapsidation by interacting with the capsid protein VP3.</text>
</comment>
<comment type="function">
    <molecule>Protein 3AB</molecule>
    <text evidence="2">Localizes the viral replication complex to the surface of membranous vesicles. Together with protein 3CD binds the Cis-Active RNA Element (CRE) which is involved in RNA synthesis initiation. Acts as a cofactor to stimulate the activity of 3D polymerase, maybe through a nucleid acid chaperone activity.</text>
</comment>
<comment type="function">
    <molecule>Protein 3A</molecule>
    <text evidence="2 5">Localizes the viral replication complex to the surface of membranous vesicles (By similarity). It inhibits host cell endoplasmic reticulum-to-Golgi apparatus transport and causes the disassembly of the Golgi complex, possibly through GBF1 interaction (By similarity). This would result in depletion of MHC, trail receptors and IFN receptors at the host cell surface (By similarity). Plays an essential role in viral RNA replication by recruiting ACBD3 and PI4KB at the viral replication sites, thereby allowing the formation of the rearranged membranous structures where viral replication takes place (By similarity).</text>
</comment>
<comment type="function">
    <molecule>Viral protein genome-linked</molecule>
    <text evidence="2">Acts as a primer for viral RNA replication and remains covalently bound to viral genomic RNA. VPg is uridylylated prior to priming replication into VPg-pUpU. The oriI viral genomic sequence may act as a template for this. The VPg-pUpU is then used as primer on the genomic RNA poly(A) by the RNA-dependent RNA polymerase to replicate the viral genome. During genome replication, the VPg-RNA linkage is removed by the host TDP2, thereby accelerating replication. During the late stage of the replication cycle, host TDP2 is excluded from sites of viral RNA synthesis and encapsidation, allowing for the generation of progeny virions.</text>
</comment>
<comment type="function">
    <molecule>Protein 3CD</molecule>
    <text evidence="2">Involved in the viral replication complex and viral polypeptide maturation. It exhibits protease activity with a specificity and catalytic efficiency that is different from protease 3C. Protein 3CD lacks polymerase activity. Protein 3CD binds to the 5'UTR of the viral genome.</text>
</comment>
<comment type="function">
    <molecule>RNA-directed RNA polymerase</molecule>
    <text evidence="2">Replicates the viral genomic RNA on the surface of intracellular membranes. May form linear arrays of subunits that propagate along a strong head-to-tail interaction called interface-I. Covalently attaches UMP to a tyrosine of VPg, which is used to prime RNA synthesis. The positive stranded RNA genome is first replicated at virus induced membranous vesicles, creating a dsRNA genomic replication form. This dsRNA is then used as template to synthesize positive stranded RNA genomes. ss(+)RNA genomes are either translated, replicated or encapsidated.</text>
</comment>
<comment type="function">
    <molecule>Protease 3C</molecule>
    <text evidence="2 4">Major viral protease that mediates proteolytic processing of the polyprotein (By similarity). Cleaves host EIF5B, contributing to host translation shutoff (By similarity). Also cleaves host PABPC1, contributing to host translation shutoff (By similarity). Cleaves host NLRP1, triggers host N-glycine-mediated degradation of the autoinhibitory NLRP1 N-terminal fragment (By similarity).</text>
</comment>
<comment type="catalytic activity">
    <molecule>Protein 2C</molecule>
    <reaction evidence="2">
        <text>a ribonucleoside 5'-triphosphate + H2O = a ribonucleoside 5'-diphosphate + phosphate + H(+)</text>
        <dbReference type="Rhea" id="RHEA:23680"/>
        <dbReference type="ChEBI" id="CHEBI:15377"/>
        <dbReference type="ChEBI" id="CHEBI:15378"/>
        <dbReference type="ChEBI" id="CHEBI:43474"/>
        <dbReference type="ChEBI" id="CHEBI:57930"/>
        <dbReference type="ChEBI" id="CHEBI:61557"/>
        <dbReference type="EC" id="3.6.1.15"/>
    </reaction>
</comment>
<comment type="catalytic activity">
    <molecule>Protease 2A</molecule>
    <reaction evidence="2">
        <text>Selective cleavage of Tyr-|-Gly bond in the picornavirus polyprotein.</text>
        <dbReference type="EC" id="3.4.22.29"/>
    </reaction>
</comment>
<comment type="catalytic activity">
    <molecule>RNA-directed RNA polymerase</molecule>
    <reaction evidence="10">
        <text>RNA(n) + a ribonucleoside 5'-triphosphate = RNA(n+1) + diphosphate</text>
        <dbReference type="Rhea" id="RHEA:21248"/>
        <dbReference type="Rhea" id="RHEA-COMP:14527"/>
        <dbReference type="Rhea" id="RHEA-COMP:17342"/>
        <dbReference type="ChEBI" id="CHEBI:33019"/>
        <dbReference type="ChEBI" id="CHEBI:61557"/>
        <dbReference type="ChEBI" id="CHEBI:140395"/>
        <dbReference type="EC" id="2.7.7.48"/>
    </reaction>
</comment>
<comment type="catalytic activity">
    <molecule>Protease 3C</molecule>
    <reaction evidence="12">
        <text>Selective cleavage of Gln-|-Gly bond in the poliovirus polyprotein. In other picornavirus reactions Glu may be substituted for Gln, and Ser or Thr for Gly.</text>
        <dbReference type="EC" id="3.4.22.28"/>
    </reaction>
</comment>
<comment type="cofactor">
    <molecule>RNA-directed RNA polymerase</molecule>
    <cofactor evidence="2">
        <name>Mg(2+)</name>
        <dbReference type="ChEBI" id="CHEBI:18420"/>
    </cofactor>
    <text evidence="2 5">Binds 2 magnesium ions that constitute a dinuclear catalytic metal center (By similarity). The magnesium ions are not prebound but only present for catalysis (By similarity). Requires the presence of 3CDpro or 3CPro (By similarity).</text>
</comment>
<comment type="activity regulation">
    <molecule>RNA-directed RNA polymerase</molecule>
    <text evidence="2">Replication or transcription is subject to high level of random mutations by the nucleotide analog ribavirin.</text>
</comment>
<comment type="subunit">
    <molecule>Capsid protein VP0</molecule>
    <text evidence="2">Interacts with capsid protein VP1 and capsid protein VP3 to form heterotrimeric protomers.</text>
</comment>
<comment type="subunit">
    <molecule>Capsid protein VP1</molecule>
    <text evidence="2">Interacts with capsid protein VP0, and capsid protein VP3 to form heterotrimeric protomers (By similarity). Five protomers subsequently associate to form pentamers which serve as building blocks for the capsid (By similarity). Interacts with capsid protein VP2, capsid protein VP3 and capsid protein VP4 following cleavage of capsid protein VP0 (By similarity).</text>
</comment>
<comment type="subunit">
    <molecule>Capsid protein VP2</molecule>
    <text evidence="2">Interacts with capsid protein VP1 and capsid protein VP3 in the mature capsid.</text>
</comment>
<comment type="subunit">
    <molecule>Capsid protein VP3</molecule>
    <text evidence="2">Interacts with capsid protein VP0 and capsid protein VP1 to form heterotrimeric protomers (By similarity). Five protomers subsequently associate to form pentamers which serve as building blocks for the capsid (By similarity). Interacts with capsid protein VP4 in the mature capsid (By similarity). Interacts with protein 2C; this interaction may be important for virion morphogenesis (By similarity).</text>
</comment>
<comment type="subunit">
    <molecule>Capsid protein VP4</molecule>
    <text evidence="2">Interacts with capsid protein VP1 and capsid protein VP3.</text>
</comment>
<comment type="subunit">
    <molecule>Protease 2A</molecule>
    <text evidence="6">Homodimer.</text>
</comment>
<comment type="subunit">
    <molecule>Protein 2C</molecule>
    <text evidence="2">Homohexamer; forms a hexameric ring structure with 6-fold symmetry characteristic of AAA+ ATPases (By similarity). Interacts (via N-terminus) with host RTN3 (via reticulon domain); this interaction is important for viral replication (By similarity). Interacts with capsid protein VP3; this interaction may be important for virion morphogenesis (By similarity).</text>
</comment>
<comment type="subunit">
    <molecule>Protein 3AB</molecule>
    <text evidence="2">Interacts with protein 3CD.</text>
</comment>
<comment type="subunit">
    <molecule>Protein 3A</molecule>
    <text evidence="2">Homodimer (By similarity). Interacts with host GBF1 (By similarity). Interacts (via GOLD domain) with host ACBD3 (via GOLD domain); this interaction allows the formation of a viral protein 3A/ACBD3 heterotetramer with a 2:2 stoichiometry, which will stimulate the recruitment of host PI4KB in order to synthesize PI4P at the viral RNA replication sites (By similarity).</text>
</comment>
<comment type="subunit">
    <molecule>Viral protein genome-linked</molecule>
    <text evidence="2">Interacts with RNA-directed RNA polymerase.</text>
</comment>
<comment type="subunit">
    <molecule>Protein 3CD</molecule>
    <text evidence="2">Interacts with protein 3AB and with RNA-directed RNA polymerase.</text>
</comment>
<comment type="subunit">
    <molecule>RNA-directed RNA polymerase</molecule>
    <text evidence="2">Interacts with Viral protein genome-linked and with protein 3CD.</text>
</comment>
<comment type="subcellular location">
    <molecule>Capsid protein VP0</molecule>
    <subcellularLocation>
        <location>Virion</location>
    </subcellularLocation>
    <subcellularLocation>
        <location evidence="15">Host cytoplasm</location>
    </subcellularLocation>
</comment>
<comment type="subcellular location">
    <molecule>Capsid protein VP4</molecule>
    <subcellularLocation>
        <location>Virion</location>
    </subcellularLocation>
</comment>
<comment type="subcellular location">
    <molecule>Capsid protein VP2</molecule>
    <subcellularLocation>
        <location evidence="2">Virion</location>
    </subcellularLocation>
    <subcellularLocation>
        <location evidence="15">Host cytoplasm</location>
    </subcellularLocation>
</comment>
<comment type="subcellular location">
    <molecule>Capsid protein VP3</molecule>
    <subcellularLocation>
        <location evidence="2">Virion</location>
    </subcellularLocation>
    <subcellularLocation>
        <location evidence="15">Host cytoplasm</location>
    </subcellularLocation>
</comment>
<comment type="subcellular location">
    <molecule>Capsid protein VP1</molecule>
    <subcellularLocation>
        <location evidence="2">Virion</location>
    </subcellularLocation>
    <subcellularLocation>
        <location evidence="15">Host cytoplasm</location>
    </subcellularLocation>
</comment>
<comment type="subcellular location">
    <molecule>Protein 2B</molecule>
    <subcellularLocation>
        <location evidence="15">Host cytoplasmic vesicle membrane</location>
        <topology evidence="15">Peripheral membrane protein</topology>
        <orientation evidence="15">Cytoplasmic side</orientation>
    </subcellularLocation>
    <text>Probably localizes to the surface of intracellular membrane vesicles that are induced after virus infection as the site for viral RNA replication. These vesicles are derived from the endoplasmic reticulum.</text>
</comment>
<comment type="subcellular location">
    <molecule>Protein 2C</molecule>
    <subcellularLocation>
        <location evidence="15">Host cytoplasmic vesicle membrane</location>
        <topology evidence="15">Peripheral membrane protein</topology>
        <orientation evidence="15">Cytoplasmic side</orientation>
    </subcellularLocation>
    <text>Probably localizes to the surface of intracellular membrane vesicles that are induced after virus infection as the site for viral RNA replication. These vesicles are derived from the endoplasmic reticulum.</text>
</comment>
<comment type="subcellular location">
    <molecule>Protein 3A</molecule>
    <subcellularLocation>
        <location evidence="15">Host cytoplasmic vesicle membrane</location>
        <topology evidence="15">Peripheral membrane protein</topology>
        <orientation evidence="15">Cytoplasmic side</orientation>
    </subcellularLocation>
    <text>Probably localizes to the surface of intracellular membrane vesicles that are induced after virus infection as the site for viral RNA replication. These vesicles are derived from the endoplasmic reticulum.</text>
</comment>
<comment type="subcellular location">
    <molecule>Protein 3AB</molecule>
    <subcellularLocation>
        <location evidence="15">Host cytoplasmic vesicle membrane</location>
        <topology evidence="15">Peripheral membrane protein</topology>
        <orientation evidence="15">Cytoplasmic side</orientation>
    </subcellularLocation>
    <text>Probably localizes to the surface of intracellular membrane vesicles that are induced after virus infection as the site for viral RNA replication. These vesicles are derived from the endoplasmic reticulum.</text>
</comment>
<comment type="subcellular location">
    <molecule>Viral protein genome-linked</molecule>
    <subcellularLocation>
        <location evidence="2">Virion</location>
    </subcellularLocation>
    <subcellularLocation>
        <location evidence="7">Host cytoplasm</location>
    </subcellularLocation>
</comment>
<comment type="subcellular location">
    <molecule>Protease 3C</molecule>
    <subcellularLocation>
        <location>Host cytoplasm</location>
    </subcellularLocation>
</comment>
<comment type="subcellular location">
    <molecule>Protein 3CD</molecule>
    <subcellularLocation>
        <location evidence="2">Host nucleus</location>
    </subcellularLocation>
    <subcellularLocation>
        <location evidence="2">Host cytoplasm</location>
    </subcellularLocation>
    <subcellularLocation>
        <location evidence="15">Host cytoplasmic vesicle membrane</location>
        <topology evidence="15">Peripheral membrane protein</topology>
        <orientation evidence="15">Cytoplasmic side</orientation>
    </subcellularLocation>
    <text>Probably localizes to the surface of intracellular membrane vesicles that are induced after virus infection as the site for viral RNA replication. These vesicles are derived from the endoplasmic reticulum.</text>
</comment>
<comment type="subcellular location">
    <molecule>RNA-directed RNA polymerase</molecule>
    <subcellularLocation>
        <location evidence="15">Host cytoplasmic vesicle membrane</location>
        <topology evidence="15">Peripheral membrane protein</topology>
        <orientation evidence="15">Cytoplasmic side</orientation>
    </subcellularLocation>
    <text>Probably localizes to the surface of intracellular membrane vesicles that are induced after virus infection as the site for viral RNA replication. These vesicles are derived from the endoplasmic reticulum.</text>
</comment>
<comment type="domain">
    <molecule>Protein 2C</molecule>
    <text evidence="1 2">The N-terminus has membrane-binding (By similarity). The N-terminus also displays RNA-binding properties (By similarity). The N-terminus is involved in oligomerization (By similarity). The central part contains an ATPase domain and a degenerate C4-type zinc-finger with only 3 cysteines (By similarity). The C-terminus is involved in RNA-binding (By similarity). The extreme C-terminus contains a region involved in oligomerization (By similarity).</text>
</comment>
<comment type="PTM">
    <molecule>Genome polyprotein</molecule>
    <text evidence="2">Specific enzymatic cleavages in vivo by the viral proteases yield processing intermediates and the mature proteins.</text>
</comment>
<comment type="PTM">
    <molecule>Capsid protein VP0</molecule>
    <text evidence="2">Myristoylation is required for the formation of pentamers during virus assembly. Further assembly of 12 pentamers and a molecule of genomic RNA generates the provirion.</text>
</comment>
<comment type="PTM">
    <molecule>Capsid protein VP0</molecule>
    <text evidence="2">During virion maturation, immature virions are rendered infectious following cleavage of VP0 into VP4 and VP2. This maturation seems to be an autocatalytic event triggered by the presence of RNA in the capsid and it is followed by a conformational change infectious virion.</text>
</comment>
<comment type="PTM">
    <molecule>Capsid protein VP4</molecule>
    <text evidence="2">Myristoylation is required during RNA encapsidation and formation of the mature virus particle.</text>
</comment>
<comment type="PTM">
    <molecule>Viral protein genome-linked</molecule>
    <text evidence="2">VPg is uridylylated by the polymerase into VPg-pUpU. This acts as a nucleotide-peptide primer for the genomic RNA replication.</text>
</comment>
<comment type="similarity">
    <text evidence="15">Belongs to the picornaviruses polyprotein family.</text>
</comment>
<comment type="online information" name="Virus Particle ExploreR db">
    <link uri="https://viperdb.org/Info_Page.php?VDB=1ev1"/>
    <text>Icosahedral capsid structure</text>
</comment>
<organismHost>
    <name type="scientific">Homo sapiens</name>
    <name type="common">Human</name>
    <dbReference type="NCBI Taxonomy" id="9606"/>
</organismHost>
<protein>
    <recommendedName>
        <fullName>Genome polyprotein</fullName>
    </recommendedName>
    <component>
        <recommendedName>
            <fullName>P1</fullName>
        </recommendedName>
    </component>
    <component>
        <recommendedName>
            <fullName>Capsid protein VP0</fullName>
        </recommendedName>
        <alternativeName>
            <fullName>VP4-VP2</fullName>
        </alternativeName>
    </component>
    <component>
        <recommendedName>
            <fullName>Capsid protein VP4</fullName>
        </recommendedName>
        <alternativeName>
            <fullName>P1A</fullName>
        </alternativeName>
        <alternativeName>
            <fullName>Virion protein 4</fullName>
        </alternativeName>
    </component>
    <component>
        <recommendedName>
            <fullName>Capsid protein VP2</fullName>
        </recommendedName>
        <alternativeName>
            <fullName>P1B</fullName>
        </alternativeName>
        <alternativeName>
            <fullName>Virion protein 2</fullName>
        </alternativeName>
    </component>
    <component>
        <recommendedName>
            <fullName>Capsid protein VP3</fullName>
        </recommendedName>
        <alternativeName>
            <fullName>P1C</fullName>
        </alternativeName>
        <alternativeName>
            <fullName>Virion protein 3</fullName>
        </alternativeName>
    </component>
    <component>
        <recommendedName>
            <fullName>Capsid protein VP1</fullName>
        </recommendedName>
        <alternativeName>
            <fullName>P1D</fullName>
        </alternativeName>
        <alternativeName>
            <fullName>Virion protein 1</fullName>
        </alternativeName>
    </component>
    <component>
        <recommendedName>
            <fullName>P2</fullName>
        </recommendedName>
    </component>
    <component>
        <recommendedName>
            <fullName>Protease 2A</fullName>
            <shortName>P2A</shortName>
            <ecNumber evidence="2">3.4.22.29</ecNumber>
        </recommendedName>
        <alternativeName>
            <fullName>Picornain 2A</fullName>
        </alternativeName>
        <alternativeName>
            <fullName>Protein 2A</fullName>
        </alternativeName>
    </component>
    <component>
        <recommendedName>
            <fullName>Protein 2B</fullName>
            <shortName>P2B</shortName>
        </recommendedName>
    </component>
    <component>
        <recommendedName>
            <fullName>Protein 2C</fullName>
            <shortName>P2C</shortName>
            <ecNumber evidence="2">3.6.1.15</ecNumber>
        </recommendedName>
    </component>
    <component>
        <recommendedName>
            <fullName>P3</fullName>
        </recommendedName>
    </component>
    <component>
        <recommendedName>
            <fullName>Protein 3AB</fullName>
        </recommendedName>
    </component>
    <component>
        <recommendedName>
            <fullName>Protein 3A</fullName>
            <shortName>P3A</shortName>
        </recommendedName>
    </component>
    <component>
        <recommendedName>
            <fullName>Viral protein genome-linked</fullName>
            <shortName>VPg</shortName>
        </recommendedName>
        <alternativeName>
            <fullName>Protein 3B</fullName>
            <shortName>P3B</shortName>
        </alternativeName>
    </component>
    <component>
        <recommendedName>
            <fullName>Protein 3CD</fullName>
            <ecNumber>3.4.22.28</ecNumber>
        </recommendedName>
    </component>
    <component>
        <recommendedName>
            <fullName evidence="12">Protease 3C</fullName>
            <ecNumber evidence="12">3.4.22.28</ecNumber>
        </recommendedName>
        <alternativeName>
            <fullName evidence="12">Picornain 3C</fullName>
            <shortName evidence="12">P3C</shortName>
        </alternativeName>
    </component>
    <component>
        <recommendedName>
            <fullName evidence="10">RNA-directed RNA polymerase</fullName>
            <shortName>RdRp</shortName>
            <ecNumber evidence="10">2.7.7.48</ecNumber>
        </recommendedName>
        <alternativeName>
            <fullName>3D polymerase</fullName>
            <shortName>3Dpol</shortName>
        </alternativeName>
        <alternativeName>
            <fullName>Protein 3D</fullName>
            <shortName>3D</shortName>
        </alternativeName>
    </component>
</protein>
<proteinExistence type="evidence at protein level"/>
<organism>
    <name type="scientific">Echovirus 1 (strain Human/Egypt/Farouk/1951)</name>
    <name type="common">E-1</name>
    <dbReference type="NCBI Taxonomy" id="103908"/>
    <lineage>
        <taxon>Viruses</taxon>
        <taxon>Riboviria</taxon>
        <taxon>Orthornavirae</taxon>
        <taxon>Pisuviricota</taxon>
        <taxon>Pisoniviricetes</taxon>
        <taxon>Picornavirales</taxon>
        <taxon>Picornaviridae</taxon>
        <taxon>Ensavirinae</taxon>
        <taxon>Enterovirus</taxon>
        <taxon>Enterovirus B</taxon>
    </lineage>
</organism>
<feature type="initiator methionine" description="Removed; by host" evidence="2">
    <location>
        <position position="1"/>
    </location>
</feature>
<feature type="chain" id="PRO_0000426356" description="Genome polyprotein">
    <location>
        <begin position="2"/>
        <end position="2184"/>
    </location>
</feature>
<feature type="chain" id="PRO_0000426357" description="P1">
    <location>
        <begin position="2"/>
        <end position="850"/>
    </location>
</feature>
<feature type="chain" id="PRO_0000426358" description="Capsid protein VP0">
    <location>
        <begin position="2"/>
        <end position="330"/>
    </location>
</feature>
<feature type="chain" id="PRO_0000426359" description="Capsid protein VP4">
    <location>
        <begin position="2"/>
        <end position="69"/>
    </location>
</feature>
<feature type="chain" id="PRO_0000426360" description="Capsid protein VP2">
    <location>
        <begin position="70"/>
        <end position="330"/>
    </location>
</feature>
<feature type="chain" id="PRO_0000426361" description="Capsid protein VP3">
    <location>
        <begin position="331"/>
        <end position="569"/>
    </location>
</feature>
<feature type="chain" id="PRO_0000426362" description="Capsid protein VP1">
    <location>
        <begin position="570"/>
        <end position="850"/>
    </location>
</feature>
<feature type="chain" id="PRO_0000426363" description="P2">
    <location>
        <begin position="851"/>
        <end position="1428"/>
    </location>
</feature>
<feature type="chain" id="PRO_0000426364" description="Protease 2A">
    <location>
        <begin position="851"/>
        <end position="1000"/>
    </location>
</feature>
<feature type="chain" id="PRO_0000039653" description="Protein 2B">
    <location>
        <begin position="1001"/>
        <end position="1099"/>
    </location>
</feature>
<feature type="chain" id="PRO_0000039654" description="Protein 2C">
    <location>
        <begin position="1100"/>
        <end position="1428"/>
    </location>
</feature>
<feature type="chain" id="PRO_0000426365" description="P3">
    <location>
        <begin position="1429"/>
        <end position="2184"/>
    </location>
</feature>
<feature type="chain" id="PRO_0000426366" description="Protein 3AB">
    <location>
        <begin position="1429"/>
        <end position="1539"/>
    </location>
</feature>
<feature type="chain" id="PRO_0000039655" description="Protein 3A">
    <location>
        <begin position="1429"/>
        <end position="1517"/>
    </location>
</feature>
<feature type="chain" id="PRO_0000426367" description="Viral protein genome-linked">
    <location>
        <begin position="1518"/>
        <end position="1539"/>
    </location>
</feature>
<feature type="chain" id="PRO_0000426368" description="Protein 3CD">
    <location>
        <begin position="1540"/>
        <end position="2184"/>
    </location>
</feature>
<feature type="chain" id="PRO_0000426369" description="Protease 3C">
    <location>
        <begin position="1540"/>
        <end position="1722"/>
    </location>
</feature>
<feature type="chain" id="PRO_0000426370" description="RNA-directed RNA polymerase">
    <location>
        <begin position="1723"/>
        <end position="2184"/>
    </location>
</feature>
<feature type="topological domain" description="Cytoplasmic" evidence="9">
    <location>
        <begin position="2"/>
        <end position="1494"/>
    </location>
</feature>
<feature type="intramembrane region" evidence="9">
    <location>
        <begin position="1495"/>
        <end position="1510"/>
    </location>
</feature>
<feature type="topological domain" description="Cytoplasmic" evidence="9">
    <location>
        <begin position="1511"/>
        <end position="2184"/>
    </location>
</feature>
<feature type="domain" description="SF3 helicase" evidence="11">
    <location>
        <begin position="1204"/>
        <end position="1360"/>
    </location>
</feature>
<feature type="domain" description="Peptidase C3" evidence="12">
    <location>
        <begin position="1540"/>
        <end position="1718"/>
    </location>
</feature>
<feature type="domain" description="RdRp catalytic" evidence="10">
    <location>
        <begin position="1949"/>
        <end position="2065"/>
    </location>
</feature>
<feature type="zinc finger region" description="C4-type; degenerate" evidence="1">
    <location>
        <begin position="1368"/>
        <end position="1385"/>
    </location>
</feature>
<feature type="region of interest" description="Amphipathic alpha-helix" evidence="9">
    <location>
        <begin position="567"/>
        <end position="583"/>
    </location>
</feature>
<feature type="region of interest" description="Oligomerization" evidence="2">
    <location>
        <begin position="1100"/>
        <end position="1238"/>
    </location>
</feature>
<feature type="region of interest" description="Membrane-binding" evidence="2">
    <location>
        <begin position="1100"/>
        <end position="1172"/>
    </location>
</feature>
<feature type="region of interest" description="RNA-binding" evidence="2">
    <location>
        <begin position="1121"/>
        <end position="1125"/>
    </location>
</feature>
<feature type="region of interest" description="RNA-binding" evidence="2">
    <location>
        <begin position="1412"/>
        <end position="1419"/>
    </location>
</feature>
<feature type="region of interest" description="Oligomerization" evidence="2">
    <location>
        <begin position="1423"/>
        <end position="1428"/>
    </location>
</feature>
<feature type="active site" description="For protease 2A activity" evidence="2">
    <location>
        <position position="871"/>
    </location>
</feature>
<feature type="active site" description="For protease 2A activity" evidence="2">
    <location>
        <position position="889"/>
    </location>
</feature>
<feature type="active site" description="For protease 2A activity" evidence="2">
    <location>
        <position position="960"/>
    </location>
</feature>
<feature type="active site" description="For protease 3C activity" evidence="12">
    <location>
        <position position="1579"/>
    </location>
</feature>
<feature type="active site" description="For protease 3C activity" evidence="12">
    <location>
        <position position="1610"/>
    </location>
</feature>
<feature type="active site" description="For protease 3C activity" evidence="12">
    <location>
        <position position="1686"/>
    </location>
</feature>
<feature type="binding site" evidence="8">
    <location>
        <position position="906"/>
    </location>
    <ligand>
        <name>Zn(2+)</name>
        <dbReference type="ChEBI" id="CHEBI:29105"/>
        <label>1</label>
        <note>structural</note>
    </ligand>
</feature>
<feature type="binding site" evidence="8">
    <location>
        <position position="908"/>
    </location>
    <ligand>
        <name>Zn(2+)</name>
        <dbReference type="ChEBI" id="CHEBI:29105"/>
        <label>1</label>
        <note>structural</note>
    </ligand>
</feature>
<feature type="binding site" evidence="8">
    <location>
        <position position="966"/>
    </location>
    <ligand>
        <name>Zn(2+)</name>
        <dbReference type="ChEBI" id="CHEBI:29105"/>
        <label>1</label>
        <note>structural</note>
    </ligand>
</feature>
<feature type="binding site" evidence="8">
    <location>
        <position position="968"/>
    </location>
    <ligand>
        <name>Zn(2+)</name>
        <dbReference type="ChEBI" id="CHEBI:29105"/>
        <label>1</label>
        <note>structural</note>
    </ligand>
</feature>
<feature type="binding site" evidence="1">
    <location>
        <position position="1368"/>
    </location>
    <ligand>
        <name>Zn(2+)</name>
        <dbReference type="ChEBI" id="CHEBI:29105"/>
        <label>2</label>
    </ligand>
</feature>
<feature type="binding site" evidence="1">
    <location>
        <position position="1380"/>
    </location>
    <ligand>
        <name>Zn(2+)</name>
        <dbReference type="ChEBI" id="CHEBI:29105"/>
        <label>2</label>
    </ligand>
</feature>
<feature type="binding site" evidence="1">
    <location>
        <position position="1385"/>
    </location>
    <ligand>
        <name>Zn(2+)</name>
        <dbReference type="ChEBI" id="CHEBI:29105"/>
        <label>2</label>
    </ligand>
</feature>
<feature type="binding site" evidence="2">
    <location>
        <position position="1955"/>
    </location>
    <ligand>
        <name>Mg(2+)</name>
        <dbReference type="ChEBI" id="CHEBI:18420"/>
        <label>1</label>
        <note>catalytic; for RdRp activity</note>
    </ligand>
</feature>
<feature type="binding site" evidence="2">
    <location>
        <position position="1955"/>
    </location>
    <ligand>
        <name>Mg(2+)</name>
        <dbReference type="ChEBI" id="CHEBI:18420"/>
        <label>2</label>
        <note>catalytic; for RdRp activity</note>
    </ligand>
</feature>
<feature type="binding site" evidence="2">
    <location>
        <position position="2051"/>
    </location>
    <ligand>
        <name>Mg(2+)</name>
        <dbReference type="ChEBI" id="CHEBI:18420"/>
        <label>1</label>
        <note>catalytic; for RdRp activity</note>
    </ligand>
</feature>
<feature type="binding site" evidence="2">
    <location>
        <position position="2051"/>
    </location>
    <ligand>
        <name>Mg(2+)</name>
        <dbReference type="ChEBI" id="CHEBI:18420"/>
        <label>2</label>
        <note>catalytic; for RdRp activity</note>
    </ligand>
</feature>
<feature type="site" description="Cleavage; by autolysis" evidence="2">
    <location>
        <begin position="69"/>
        <end position="70"/>
    </location>
</feature>
<feature type="site" description="Cleavage; by protease 3C" evidence="3">
    <location>
        <begin position="330"/>
        <end position="331"/>
    </location>
</feature>
<feature type="site" description="Cleavage; by autolysis" evidence="3">
    <location>
        <begin position="850"/>
        <end position="851"/>
    </location>
</feature>
<feature type="site" description="Cleavage; by protease 3C" evidence="3">
    <location>
        <begin position="1000"/>
        <end position="1001"/>
    </location>
</feature>
<feature type="site" description="Cleavage; by protease 3C" evidence="3">
    <location>
        <begin position="1099"/>
        <end position="1100"/>
    </location>
</feature>
<feature type="site" description="Involved in the interaction with host RTN3" evidence="7">
    <location>
        <position position="1124"/>
    </location>
</feature>
<feature type="site" description="Cleavage; by protease 3C" evidence="3">
    <location>
        <begin position="1428"/>
        <end position="1429"/>
    </location>
</feature>
<feature type="site" description="Cleavage; by protease 3C" evidence="3">
    <location>
        <begin position="1517"/>
        <end position="1518"/>
    </location>
</feature>
<feature type="site" description="Cleavage; by protease 3C" evidence="3">
    <location>
        <begin position="1539"/>
        <end position="1540"/>
    </location>
</feature>
<feature type="site" description="Cleavage; by protease 3C" evidence="3">
    <location>
        <begin position="1722"/>
        <end position="1723"/>
    </location>
</feature>
<feature type="modified residue" description="O-(5'-phospho-RNA)-tyrosine" evidence="2">
    <location>
        <position position="1520"/>
    </location>
</feature>
<feature type="lipid moiety-binding region" description="N-myristoyl glycine; by host" evidence="2">
    <location>
        <position position="2"/>
    </location>
</feature>
<feature type="sequence conflict" description="In Ref. 2; CAA61710." evidence="15" ref="2">
    <original>N</original>
    <variation>M</variation>
    <location>
        <position position="69"/>
    </location>
</feature>
<feature type="sequence conflict" description="In Ref. 2; CAA61710." evidence="15" ref="2">
    <original>A</original>
    <variation>R</variation>
    <location>
        <position position="238"/>
    </location>
</feature>
<feature type="sequence conflict" description="In Ref. 3; AAD17718." evidence="15" ref="3">
    <original>A</original>
    <variation>V</variation>
    <location>
        <position position="611"/>
    </location>
</feature>
<feature type="sequence conflict" description="In Ref. 3; AAD17718." evidence="15" ref="3">
    <original>Y</original>
    <variation>F</variation>
    <location>
        <position position="645"/>
    </location>
</feature>
<feature type="sequence conflict" description="In Ref. 3; AAD17718." evidence="15" ref="3">
    <original>V</original>
    <variation>I</variation>
    <location>
        <position position="724"/>
    </location>
</feature>
<feature type="sequence conflict" description="In Ref. 3; AAD17718." evidence="15" ref="3">
    <original>A</original>
    <variation>T</variation>
    <location>
        <position position="774"/>
    </location>
</feature>
<feature type="helix" evidence="16">
    <location>
        <begin position="1540"/>
        <end position="1553"/>
    </location>
</feature>
<feature type="strand" evidence="16">
    <location>
        <begin position="1554"/>
        <end position="1559"/>
    </location>
</feature>
<feature type="strand" evidence="16">
    <location>
        <begin position="1562"/>
        <end position="1571"/>
    </location>
</feature>
<feature type="strand" evidence="16">
    <location>
        <begin position="1573"/>
        <end position="1577"/>
    </location>
</feature>
<feature type="helix" evidence="16">
    <location>
        <begin position="1578"/>
        <end position="1580"/>
    </location>
</feature>
<feature type="strand" evidence="16">
    <location>
        <begin position="1584"/>
        <end position="1588"/>
    </location>
</feature>
<feature type="strand" evidence="16">
    <location>
        <begin position="1591"/>
        <end position="1602"/>
    </location>
</feature>
<feature type="strand" evidence="16">
    <location>
        <begin position="1608"/>
        <end position="1617"/>
    </location>
</feature>
<feature type="helix" evidence="16">
    <location>
        <begin position="1626"/>
        <end position="1628"/>
    </location>
</feature>
<feature type="strand" evidence="16">
    <location>
        <begin position="1636"/>
        <end position="1643"/>
    </location>
</feature>
<feature type="strand" evidence="16">
    <location>
        <begin position="1645"/>
        <end position="1648"/>
    </location>
</feature>
<feature type="strand" evidence="16">
    <location>
        <begin position="1651"/>
        <end position="1666"/>
    </location>
</feature>
<feature type="strand" evidence="16">
    <location>
        <begin position="1669"/>
        <end position="1678"/>
    </location>
</feature>
<feature type="strand" evidence="16">
    <location>
        <begin position="1689"/>
        <end position="1692"/>
    </location>
</feature>
<feature type="strand" evidence="16">
    <location>
        <begin position="1695"/>
        <end position="1703"/>
    </location>
</feature>
<feature type="strand" evidence="16">
    <location>
        <begin position="1705"/>
        <end position="1712"/>
    </location>
</feature>
<feature type="helix" evidence="16">
    <location>
        <begin position="1715"/>
        <end position="1718"/>
    </location>
</feature>
<accession>O91734</accession>
<accession>Q66795</accession>
<accession>Q9YID6</accession>